<sequence>MSTKDFIEKDYYKVLGVPKDATEAEIKKAYRKLAREFHPDANKGNAKAEERFKEISEANDILGDTKKRKEYDEARTLFGNGGFRPGPGAQGGSFNFDLGDLFGGGAQQGGGAGGGFGGGIGDVFGGLFNRGGAGPGTGTRTQPRRGQDIESEVTLSFTEAVDGATVPLRMSSQAPCKACSGTGDANGTPRVCPTCVGTGQVARGSGGGFSLTDPCPDCKGRGLIAENPCEICKGSGRAKSSRTMQVRIPAGVSDSQRIRLRGKGAPGERGGPAGDLYVVVHVDAHPVFGRKGDNLTVTVPVTFAEAALGGEVKVPTLGGPAVTLKLPPGTPNGRTMRARGKGAVRKDGTRGDLLVTVEVTVPKDVSGKARDALEAYREATAGEDPRAELFQAAKGA</sequence>
<organism>
    <name type="scientific">Streptomyces avermitilis (strain ATCC 31267 / DSM 46492 / JCM 5070 / NBRC 14893 / NCIMB 12804 / NRRL 8165 / MA-4680)</name>
    <dbReference type="NCBI Taxonomy" id="227882"/>
    <lineage>
        <taxon>Bacteria</taxon>
        <taxon>Bacillati</taxon>
        <taxon>Actinomycetota</taxon>
        <taxon>Actinomycetes</taxon>
        <taxon>Kitasatosporales</taxon>
        <taxon>Streptomycetaceae</taxon>
        <taxon>Streptomyces</taxon>
    </lineage>
</organism>
<keyword id="KW-0143">Chaperone</keyword>
<keyword id="KW-0963">Cytoplasm</keyword>
<keyword id="KW-0235">DNA replication</keyword>
<keyword id="KW-0479">Metal-binding</keyword>
<keyword id="KW-1185">Reference proteome</keyword>
<keyword id="KW-0677">Repeat</keyword>
<keyword id="KW-0346">Stress response</keyword>
<keyword id="KW-0862">Zinc</keyword>
<keyword id="KW-0863">Zinc-finger</keyword>
<feature type="chain" id="PRO_0000070896" description="Chaperone protein DnaJ 1">
    <location>
        <begin position="1"/>
        <end position="396"/>
    </location>
</feature>
<feature type="domain" description="J" evidence="1">
    <location>
        <begin position="10"/>
        <end position="75"/>
    </location>
</feature>
<feature type="repeat" description="CXXCXGXG motif">
    <location>
        <begin position="176"/>
        <end position="183"/>
    </location>
</feature>
<feature type="repeat" description="CXXCXGXG motif">
    <location>
        <begin position="192"/>
        <end position="199"/>
    </location>
</feature>
<feature type="repeat" description="CXXCXGXG motif">
    <location>
        <begin position="215"/>
        <end position="222"/>
    </location>
</feature>
<feature type="repeat" description="CXXCXGXG motif">
    <location>
        <begin position="229"/>
        <end position="236"/>
    </location>
</feature>
<feature type="zinc finger region" description="CR-type" evidence="1">
    <location>
        <begin position="163"/>
        <end position="241"/>
    </location>
</feature>
<feature type="region of interest" description="Disordered" evidence="2">
    <location>
        <begin position="127"/>
        <end position="149"/>
    </location>
</feature>
<feature type="compositionally biased region" description="Gly residues" evidence="2">
    <location>
        <begin position="127"/>
        <end position="137"/>
    </location>
</feature>
<feature type="binding site" evidence="1">
    <location>
        <position position="176"/>
    </location>
    <ligand>
        <name>Zn(2+)</name>
        <dbReference type="ChEBI" id="CHEBI:29105"/>
        <label>1</label>
    </ligand>
</feature>
<feature type="binding site" evidence="1">
    <location>
        <position position="179"/>
    </location>
    <ligand>
        <name>Zn(2+)</name>
        <dbReference type="ChEBI" id="CHEBI:29105"/>
        <label>1</label>
    </ligand>
</feature>
<feature type="binding site" evidence="1">
    <location>
        <position position="192"/>
    </location>
    <ligand>
        <name>Zn(2+)</name>
        <dbReference type="ChEBI" id="CHEBI:29105"/>
        <label>2</label>
    </ligand>
</feature>
<feature type="binding site" evidence="1">
    <location>
        <position position="195"/>
    </location>
    <ligand>
        <name>Zn(2+)</name>
        <dbReference type="ChEBI" id="CHEBI:29105"/>
        <label>2</label>
    </ligand>
</feature>
<feature type="binding site" evidence="1">
    <location>
        <position position="215"/>
    </location>
    <ligand>
        <name>Zn(2+)</name>
        <dbReference type="ChEBI" id="CHEBI:29105"/>
        <label>2</label>
    </ligand>
</feature>
<feature type="binding site" evidence="1">
    <location>
        <position position="218"/>
    </location>
    <ligand>
        <name>Zn(2+)</name>
        <dbReference type="ChEBI" id="CHEBI:29105"/>
        <label>2</label>
    </ligand>
</feature>
<feature type="binding site" evidence="1">
    <location>
        <position position="229"/>
    </location>
    <ligand>
        <name>Zn(2+)</name>
        <dbReference type="ChEBI" id="CHEBI:29105"/>
        <label>1</label>
    </ligand>
</feature>
<feature type="binding site" evidence="1">
    <location>
        <position position="232"/>
    </location>
    <ligand>
        <name>Zn(2+)</name>
        <dbReference type="ChEBI" id="CHEBI:29105"/>
        <label>1</label>
    </ligand>
</feature>
<accession>Q82EX7</accession>
<reference key="1">
    <citation type="journal article" date="2001" name="Proc. Natl. Acad. Sci. U.S.A.">
        <title>Genome sequence of an industrial microorganism Streptomyces avermitilis: deducing the ability of producing secondary metabolites.</title>
        <authorList>
            <person name="Omura S."/>
            <person name="Ikeda H."/>
            <person name="Ishikawa J."/>
            <person name="Hanamoto A."/>
            <person name="Takahashi C."/>
            <person name="Shinose M."/>
            <person name="Takahashi Y."/>
            <person name="Horikawa H."/>
            <person name="Nakazawa H."/>
            <person name="Osonoe T."/>
            <person name="Kikuchi H."/>
            <person name="Shiba T."/>
            <person name="Sakaki Y."/>
            <person name="Hattori M."/>
        </authorList>
    </citation>
    <scope>NUCLEOTIDE SEQUENCE [LARGE SCALE GENOMIC DNA]</scope>
    <source>
        <strain>ATCC 31267 / DSM 46492 / JCM 5070 / NBRC 14893 / NCIMB 12804 / NRRL 8165 / MA-4680</strain>
    </source>
</reference>
<reference key="2">
    <citation type="journal article" date="2003" name="Nat. Biotechnol.">
        <title>Complete genome sequence and comparative analysis of the industrial microorganism Streptomyces avermitilis.</title>
        <authorList>
            <person name="Ikeda H."/>
            <person name="Ishikawa J."/>
            <person name="Hanamoto A."/>
            <person name="Shinose M."/>
            <person name="Kikuchi H."/>
            <person name="Shiba T."/>
            <person name="Sakaki Y."/>
            <person name="Hattori M."/>
            <person name="Omura S."/>
        </authorList>
    </citation>
    <scope>NUCLEOTIDE SEQUENCE [LARGE SCALE GENOMIC DNA]</scope>
    <source>
        <strain>ATCC 31267 / DSM 46492 / JCM 5070 / NBRC 14893 / NCIMB 12804 / NRRL 8165 / MA-4680</strain>
    </source>
</reference>
<gene>
    <name evidence="1" type="primary">dnaJ1</name>
    <name type="ordered locus">SAV_4486</name>
</gene>
<evidence type="ECO:0000255" key="1">
    <source>
        <dbReference type="HAMAP-Rule" id="MF_01152"/>
    </source>
</evidence>
<evidence type="ECO:0000256" key="2">
    <source>
        <dbReference type="SAM" id="MobiDB-lite"/>
    </source>
</evidence>
<proteinExistence type="inferred from homology"/>
<dbReference type="EMBL" id="BA000030">
    <property type="protein sequence ID" value="BAC72198.1"/>
    <property type="molecule type" value="Genomic_DNA"/>
</dbReference>
<dbReference type="SMR" id="Q82EX7"/>
<dbReference type="GeneID" id="41541565"/>
<dbReference type="KEGG" id="sma:SAVERM_4486"/>
<dbReference type="eggNOG" id="COG0484">
    <property type="taxonomic scope" value="Bacteria"/>
</dbReference>
<dbReference type="HOGENOM" id="CLU_017633_0_7_11"/>
<dbReference type="OrthoDB" id="9779889at2"/>
<dbReference type="Proteomes" id="UP000000428">
    <property type="component" value="Chromosome"/>
</dbReference>
<dbReference type="GO" id="GO:0005737">
    <property type="term" value="C:cytoplasm"/>
    <property type="evidence" value="ECO:0007669"/>
    <property type="project" value="UniProtKB-SubCell"/>
</dbReference>
<dbReference type="GO" id="GO:0005524">
    <property type="term" value="F:ATP binding"/>
    <property type="evidence" value="ECO:0007669"/>
    <property type="project" value="InterPro"/>
</dbReference>
<dbReference type="GO" id="GO:0031072">
    <property type="term" value="F:heat shock protein binding"/>
    <property type="evidence" value="ECO:0007669"/>
    <property type="project" value="InterPro"/>
</dbReference>
<dbReference type="GO" id="GO:0051082">
    <property type="term" value="F:unfolded protein binding"/>
    <property type="evidence" value="ECO:0007669"/>
    <property type="project" value="UniProtKB-UniRule"/>
</dbReference>
<dbReference type="GO" id="GO:0008270">
    <property type="term" value="F:zinc ion binding"/>
    <property type="evidence" value="ECO:0007669"/>
    <property type="project" value="UniProtKB-UniRule"/>
</dbReference>
<dbReference type="GO" id="GO:0051085">
    <property type="term" value="P:chaperone cofactor-dependent protein refolding"/>
    <property type="evidence" value="ECO:0007669"/>
    <property type="project" value="TreeGrafter"/>
</dbReference>
<dbReference type="GO" id="GO:0006260">
    <property type="term" value="P:DNA replication"/>
    <property type="evidence" value="ECO:0007669"/>
    <property type="project" value="UniProtKB-KW"/>
</dbReference>
<dbReference type="GO" id="GO:0042026">
    <property type="term" value="P:protein refolding"/>
    <property type="evidence" value="ECO:0007669"/>
    <property type="project" value="TreeGrafter"/>
</dbReference>
<dbReference type="GO" id="GO:0009408">
    <property type="term" value="P:response to heat"/>
    <property type="evidence" value="ECO:0007669"/>
    <property type="project" value="InterPro"/>
</dbReference>
<dbReference type="CDD" id="cd06257">
    <property type="entry name" value="DnaJ"/>
    <property type="match status" value="1"/>
</dbReference>
<dbReference type="CDD" id="cd10747">
    <property type="entry name" value="DnaJ_C"/>
    <property type="match status" value="1"/>
</dbReference>
<dbReference type="CDD" id="cd10719">
    <property type="entry name" value="DnaJ_zf"/>
    <property type="match status" value="1"/>
</dbReference>
<dbReference type="FunFam" id="2.60.260.20:FF:000005">
    <property type="entry name" value="Chaperone protein dnaJ 1, mitochondrial"/>
    <property type="match status" value="1"/>
</dbReference>
<dbReference type="FunFam" id="1.10.287.110:FF:000045">
    <property type="entry name" value="Molecular chaperone DnaJ"/>
    <property type="match status" value="1"/>
</dbReference>
<dbReference type="Gene3D" id="6.20.20.10">
    <property type="match status" value="2"/>
</dbReference>
<dbReference type="Gene3D" id="1.10.287.110">
    <property type="entry name" value="DnaJ domain"/>
    <property type="match status" value="1"/>
</dbReference>
<dbReference type="Gene3D" id="2.60.260.20">
    <property type="entry name" value="Urease metallochaperone UreE, N-terminal domain"/>
    <property type="match status" value="2"/>
</dbReference>
<dbReference type="HAMAP" id="MF_01152">
    <property type="entry name" value="DnaJ"/>
    <property type="match status" value="1"/>
</dbReference>
<dbReference type="InterPro" id="IPR012724">
    <property type="entry name" value="DnaJ"/>
</dbReference>
<dbReference type="InterPro" id="IPR002939">
    <property type="entry name" value="DnaJ_C"/>
</dbReference>
<dbReference type="InterPro" id="IPR001623">
    <property type="entry name" value="DnaJ_domain"/>
</dbReference>
<dbReference type="InterPro" id="IPR018253">
    <property type="entry name" value="DnaJ_domain_CS"/>
</dbReference>
<dbReference type="InterPro" id="IPR008971">
    <property type="entry name" value="HSP40/DnaJ_pept-bd"/>
</dbReference>
<dbReference type="InterPro" id="IPR001305">
    <property type="entry name" value="HSP_DnaJ_Cys-rich_dom"/>
</dbReference>
<dbReference type="InterPro" id="IPR036410">
    <property type="entry name" value="HSP_DnaJ_Cys-rich_dom_sf"/>
</dbReference>
<dbReference type="InterPro" id="IPR036869">
    <property type="entry name" value="J_dom_sf"/>
</dbReference>
<dbReference type="NCBIfam" id="TIGR02349">
    <property type="entry name" value="DnaJ_bact"/>
    <property type="match status" value="1"/>
</dbReference>
<dbReference type="NCBIfam" id="NF008035">
    <property type="entry name" value="PRK10767.1"/>
    <property type="match status" value="1"/>
</dbReference>
<dbReference type="NCBIfam" id="NF010888">
    <property type="entry name" value="PRK14295.1"/>
    <property type="match status" value="1"/>
</dbReference>
<dbReference type="PANTHER" id="PTHR43096:SF54">
    <property type="entry name" value="CHAPERONE PROTEIN DNAJ 1"/>
    <property type="match status" value="1"/>
</dbReference>
<dbReference type="PANTHER" id="PTHR43096">
    <property type="entry name" value="DNAJ HOMOLOG 1, MITOCHONDRIAL-RELATED"/>
    <property type="match status" value="1"/>
</dbReference>
<dbReference type="Pfam" id="PF00226">
    <property type="entry name" value="DnaJ"/>
    <property type="match status" value="1"/>
</dbReference>
<dbReference type="Pfam" id="PF01556">
    <property type="entry name" value="DnaJ_C"/>
    <property type="match status" value="1"/>
</dbReference>
<dbReference type="Pfam" id="PF00684">
    <property type="entry name" value="DnaJ_CXXCXGXG"/>
    <property type="match status" value="1"/>
</dbReference>
<dbReference type="PRINTS" id="PR00625">
    <property type="entry name" value="JDOMAIN"/>
</dbReference>
<dbReference type="SMART" id="SM00271">
    <property type="entry name" value="DnaJ"/>
    <property type="match status" value="1"/>
</dbReference>
<dbReference type="SUPFAM" id="SSF46565">
    <property type="entry name" value="Chaperone J-domain"/>
    <property type="match status" value="1"/>
</dbReference>
<dbReference type="SUPFAM" id="SSF57938">
    <property type="entry name" value="DnaJ/Hsp40 cysteine-rich domain"/>
    <property type="match status" value="1"/>
</dbReference>
<dbReference type="SUPFAM" id="SSF49493">
    <property type="entry name" value="HSP40/DnaJ peptide-binding domain"/>
    <property type="match status" value="2"/>
</dbReference>
<dbReference type="PROSITE" id="PS00636">
    <property type="entry name" value="DNAJ_1"/>
    <property type="match status" value="1"/>
</dbReference>
<dbReference type="PROSITE" id="PS50076">
    <property type="entry name" value="DNAJ_2"/>
    <property type="match status" value="1"/>
</dbReference>
<dbReference type="PROSITE" id="PS51188">
    <property type="entry name" value="ZF_CR"/>
    <property type="match status" value="1"/>
</dbReference>
<comment type="function">
    <text evidence="1">Participates actively in the response to hyperosmotic and heat shock by preventing the aggregation of stress-denatured proteins and by disaggregating proteins, also in an autonomous, DnaK-independent fashion. Unfolded proteins bind initially to DnaJ; upon interaction with the DnaJ-bound protein, DnaK hydrolyzes its bound ATP, resulting in the formation of a stable complex. GrpE releases ADP from DnaK; ATP binding to DnaK triggers the release of the substrate protein, thus completing the reaction cycle. Several rounds of ATP-dependent interactions between DnaJ, DnaK and GrpE are required for fully efficient folding. Also involved, together with DnaK and GrpE, in the DNA replication of plasmids through activation of initiation proteins.</text>
</comment>
<comment type="cofactor">
    <cofactor evidence="1">
        <name>Zn(2+)</name>
        <dbReference type="ChEBI" id="CHEBI:29105"/>
    </cofactor>
    <text evidence="1">Binds 2 Zn(2+) ions per monomer.</text>
</comment>
<comment type="subunit">
    <text evidence="1">Homodimer.</text>
</comment>
<comment type="subcellular location">
    <subcellularLocation>
        <location evidence="1">Cytoplasm</location>
    </subcellularLocation>
</comment>
<comment type="domain">
    <text evidence="1">The J domain is necessary and sufficient to stimulate DnaK ATPase activity. Zinc center 1 plays an important role in the autonomous, DnaK-independent chaperone activity of DnaJ. Zinc center 2 is essential for interaction with DnaK and for DnaJ activity.</text>
</comment>
<comment type="similarity">
    <text evidence="1">Belongs to the DnaJ family.</text>
</comment>
<protein>
    <recommendedName>
        <fullName evidence="1">Chaperone protein DnaJ 1</fullName>
    </recommendedName>
</protein>
<name>DNAJ1_STRAW</name>